<organism>
    <name type="scientific">Haemophilus influenzae (strain 86-028NP)</name>
    <dbReference type="NCBI Taxonomy" id="281310"/>
    <lineage>
        <taxon>Bacteria</taxon>
        <taxon>Pseudomonadati</taxon>
        <taxon>Pseudomonadota</taxon>
        <taxon>Gammaproteobacteria</taxon>
        <taxon>Pasteurellales</taxon>
        <taxon>Pasteurellaceae</taxon>
        <taxon>Haemophilus</taxon>
    </lineage>
</organism>
<protein>
    <recommendedName>
        <fullName evidence="1">Fatty acid metabolism regulator protein</fullName>
    </recommendedName>
</protein>
<evidence type="ECO:0000255" key="1">
    <source>
        <dbReference type="HAMAP-Rule" id="MF_00696"/>
    </source>
</evidence>
<comment type="function">
    <text evidence="1">Multifunctional regulator of fatty acid metabolism.</text>
</comment>
<comment type="subunit">
    <text evidence="1">Homodimer.</text>
</comment>
<comment type="subcellular location">
    <subcellularLocation>
        <location evidence="1">Cytoplasm</location>
    </subcellularLocation>
</comment>
<dbReference type="EMBL" id="CP000057">
    <property type="protein sequence ID" value="AAX87478.1"/>
    <property type="molecule type" value="Genomic_DNA"/>
</dbReference>
<dbReference type="RefSeq" id="WP_005659812.1">
    <property type="nucleotide sequence ID" value="NC_007146.2"/>
</dbReference>
<dbReference type="SMR" id="Q4QNB9"/>
<dbReference type="GeneID" id="93219439"/>
<dbReference type="KEGG" id="hit:NTHI0550"/>
<dbReference type="HOGENOM" id="CLU_017584_9_4_6"/>
<dbReference type="Proteomes" id="UP000002525">
    <property type="component" value="Chromosome"/>
</dbReference>
<dbReference type="GO" id="GO:0005737">
    <property type="term" value="C:cytoplasm"/>
    <property type="evidence" value="ECO:0007669"/>
    <property type="project" value="UniProtKB-SubCell"/>
</dbReference>
<dbReference type="GO" id="GO:0003677">
    <property type="term" value="F:DNA binding"/>
    <property type="evidence" value="ECO:0007669"/>
    <property type="project" value="UniProtKB-KW"/>
</dbReference>
<dbReference type="GO" id="GO:0003700">
    <property type="term" value="F:DNA-binding transcription factor activity"/>
    <property type="evidence" value="ECO:0007669"/>
    <property type="project" value="UniProtKB-UniRule"/>
</dbReference>
<dbReference type="GO" id="GO:0000062">
    <property type="term" value="F:fatty-acyl-CoA binding"/>
    <property type="evidence" value="ECO:0007669"/>
    <property type="project" value="InterPro"/>
</dbReference>
<dbReference type="GO" id="GO:0006631">
    <property type="term" value="P:fatty acid metabolic process"/>
    <property type="evidence" value="ECO:0007669"/>
    <property type="project" value="UniProtKB-KW"/>
</dbReference>
<dbReference type="GO" id="GO:0019217">
    <property type="term" value="P:regulation of fatty acid metabolic process"/>
    <property type="evidence" value="ECO:0007669"/>
    <property type="project" value="UniProtKB-UniRule"/>
</dbReference>
<dbReference type="CDD" id="cd07377">
    <property type="entry name" value="WHTH_GntR"/>
    <property type="match status" value="1"/>
</dbReference>
<dbReference type="Gene3D" id="1.20.120.530">
    <property type="entry name" value="GntR ligand-binding domain-like"/>
    <property type="match status" value="1"/>
</dbReference>
<dbReference type="Gene3D" id="1.10.10.10">
    <property type="entry name" value="Winged helix-like DNA-binding domain superfamily/Winged helix DNA-binding domain"/>
    <property type="match status" value="1"/>
</dbReference>
<dbReference type="HAMAP" id="MF_00696">
    <property type="entry name" value="HTH_FadR"/>
    <property type="match status" value="1"/>
</dbReference>
<dbReference type="InterPro" id="IPR014178">
    <property type="entry name" value="FA-response_TF_FadR"/>
</dbReference>
<dbReference type="InterPro" id="IPR028374">
    <property type="entry name" value="FadR_C"/>
</dbReference>
<dbReference type="InterPro" id="IPR008920">
    <property type="entry name" value="TF_FadR/GntR_C"/>
</dbReference>
<dbReference type="InterPro" id="IPR000524">
    <property type="entry name" value="Tscrpt_reg_HTH_GntR"/>
</dbReference>
<dbReference type="InterPro" id="IPR036388">
    <property type="entry name" value="WH-like_DNA-bd_sf"/>
</dbReference>
<dbReference type="InterPro" id="IPR036390">
    <property type="entry name" value="WH_DNA-bd_sf"/>
</dbReference>
<dbReference type="NCBIfam" id="TIGR02812">
    <property type="entry name" value="fadR_gamma"/>
    <property type="match status" value="1"/>
</dbReference>
<dbReference type="NCBIfam" id="NF003444">
    <property type="entry name" value="PRK04984.1"/>
    <property type="match status" value="1"/>
</dbReference>
<dbReference type="PANTHER" id="PTHR43537:SF52">
    <property type="entry name" value="FATTY ACID METABOLISM REGULATOR PROTEIN"/>
    <property type="match status" value="1"/>
</dbReference>
<dbReference type="PANTHER" id="PTHR43537">
    <property type="entry name" value="TRANSCRIPTIONAL REGULATOR, GNTR FAMILY"/>
    <property type="match status" value="1"/>
</dbReference>
<dbReference type="Pfam" id="PF07840">
    <property type="entry name" value="FadR_C"/>
    <property type="match status" value="1"/>
</dbReference>
<dbReference type="Pfam" id="PF00392">
    <property type="entry name" value="GntR"/>
    <property type="match status" value="1"/>
</dbReference>
<dbReference type="PRINTS" id="PR00035">
    <property type="entry name" value="HTHGNTR"/>
</dbReference>
<dbReference type="SMART" id="SM00345">
    <property type="entry name" value="HTH_GNTR"/>
    <property type="match status" value="1"/>
</dbReference>
<dbReference type="SUPFAM" id="SSF48008">
    <property type="entry name" value="GntR ligand-binding domain-like"/>
    <property type="match status" value="1"/>
</dbReference>
<dbReference type="SUPFAM" id="SSF46785">
    <property type="entry name" value="Winged helix' DNA-binding domain"/>
    <property type="match status" value="1"/>
</dbReference>
<dbReference type="PROSITE" id="PS50949">
    <property type="entry name" value="HTH_GNTR"/>
    <property type="match status" value="1"/>
</dbReference>
<reference key="1">
    <citation type="journal article" date="2005" name="J. Bacteriol.">
        <title>Genomic sequence of an otitis media isolate of nontypeable Haemophilus influenzae: comparative study with H. influenzae serotype d, strain KW20.</title>
        <authorList>
            <person name="Harrison A."/>
            <person name="Dyer D.W."/>
            <person name="Gillaspy A."/>
            <person name="Ray W.C."/>
            <person name="Mungur R."/>
            <person name="Carson M.B."/>
            <person name="Zhong H."/>
            <person name="Gipson J."/>
            <person name="Gipson M."/>
            <person name="Johnson L.S."/>
            <person name="Lewis L."/>
            <person name="Bakaletz L.O."/>
            <person name="Munson R.S. Jr."/>
        </authorList>
    </citation>
    <scope>NUCLEOTIDE SEQUENCE [LARGE SCALE GENOMIC DNA]</scope>
    <source>
        <strain>86-028NP</strain>
    </source>
</reference>
<accession>Q4QNB9</accession>
<feature type="chain" id="PRO_0000301506" description="Fatty acid metabolism regulator protein">
    <location>
        <begin position="1"/>
        <end position="241"/>
    </location>
</feature>
<feature type="domain" description="HTH gntR-type" evidence="1">
    <location>
        <begin position="11"/>
        <end position="79"/>
    </location>
</feature>
<feature type="DNA-binding region" description="H-T-H motif" evidence="1">
    <location>
        <begin position="39"/>
        <end position="58"/>
    </location>
</feature>
<sequence>MQNNNDILKAQSPAALAEEYIVKSIWQDVFPSGSNLPSERDLADKIGVTRTTLREVLQRLARDGWLTIQHGKPTKVNNIWDAAGPNIIETLIALDMQSAPLIIDNMLSLRSKMSESYIYEAVKNSPQKSTALFAELEQLQNTAQDYTEFDYQLFRQFTVVANKPFYRLIFNSLKGVYQRIGLLFFKEKKHRELTKQFYLEMQQICLEGNADAVVDCIRKHNLRSSTYWKAILERLPQNLSD</sequence>
<keyword id="KW-0010">Activator</keyword>
<keyword id="KW-0963">Cytoplasm</keyword>
<keyword id="KW-0238">DNA-binding</keyword>
<keyword id="KW-0276">Fatty acid metabolism</keyword>
<keyword id="KW-0443">Lipid metabolism</keyword>
<keyword id="KW-0678">Repressor</keyword>
<keyword id="KW-0804">Transcription</keyword>
<keyword id="KW-0805">Transcription regulation</keyword>
<gene>
    <name evidence="1" type="primary">fadR</name>
    <name type="ordered locus">NTHI0550</name>
</gene>
<name>FADR_HAEI8</name>
<proteinExistence type="inferred from homology"/>